<proteinExistence type="inferred from homology"/>
<gene>
    <name evidence="1" type="primary">purA</name>
    <name type="ordered locus">Sden_0509</name>
</gene>
<keyword id="KW-0963">Cytoplasm</keyword>
<keyword id="KW-0342">GTP-binding</keyword>
<keyword id="KW-0436">Ligase</keyword>
<keyword id="KW-0460">Magnesium</keyword>
<keyword id="KW-0479">Metal-binding</keyword>
<keyword id="KW-0547">Nucleotide-binding</keyword>
<keyword id="KW-0658">Purine biosynthesis</keyword>
<keyword id="KW-1185">Reference proteome</keyword>
<evidence type="ECO:0000255" key="1">
    <source>
        <dbReference type="HAMAP-Rule" id="MF_00011"/>
    </source>
</evidence>
<organism>
    <name type="scientific">Shewanella denitrificans (strain OS217 / ATCC BAA-1090 / DSM 15013)</name>
    <dbReference type="NCBI Taxonomy" id="318161"/>
    <lineage>
        <taxon>Bacteria</taxon>
        <taxon>Pseudomonadati</taxon>
        <taxon>Pseudomonadota</taxon>
        <taxon>Gammaproteobacteria</taxon>
        <taxon>Alteromonadales</taxon>
        <taxon>Shewanellaceae</taxon>
        <taxon>Shewanella</taxon>
    </lineage>
</organism>
<sequence>MGKNVVVLGTQWGDEGKGKIVDLLTEQAKYVVRYQGGHNAGHTLVINGDKTVLHLIPSGILRDNVKCIIGNGVVVAPDALLKEINMLKERGVPVEERLLISEACPLILPFHCALDIAREKARGNKAIGTTGRGIGPAYEDKVSRRGLRIGDLFNAELFATKLAEVMKYHNFMLTEYYKVEAVDYQKTLDDALAIADYLKSMCTDVTELLDTARKAGEPIMFEGAQGTLLDIDHGTYPFVTSSNTTAGGVATGSGFGPRHLDYVLGIMKAYTTRVGAGPFPTELSCEIGDYIGHKGQEFGATTGRKRRPGWLDAVAMRRAVQINSVSGFCLTKLDVLDGLEEVKICVGYQYPDGTVETVTPLAAEGYEEVTPVYETMPGWSDITFGATSIEQLPAAAIAYIKRIEELLETPIDIISTGPDRNETMILVNPFN</sequence>
<dbReference type="EC" id="6.3.4.4" evidence="1"/>
<dbReference type="EMBL" id="CP000302">
    <property type="protein sequence ID" value="ABE53801.1"/>
    <property type="molecule type" value="Genomic_DNA"/>
</dbReference>
<dbReference type="RefSeq" id="WP_011494967.1">
    <property type="nucleotide sequence ID" value="NC_007954.1"/>
</dbReference>
<dbReference type="SMR" id="Q12RX5"/>
<dbReference type="STRING" id="318161.Sden_0509"/>
<dbReference type="KEGG" id="sdn:Sden_0509"/>
<dbReference type="eggNOG" id="COG0104">
    <property type="taxonomic scope" value="Bacteria"/>
</dbReference>
<dbReference type="HOGENOM" id="CLU_029848_0_0_6"/>
<dbReference type="OrthoDB" id="9807553at2"/>
<dbReference type="UniPathway" id="UPA00075">
    <property type="reaction ID" value="UER00335"/>
</dbReference>
<dbReference type="Proteomes" id="UP000001982">
    <property type="component" value="Chromosome"/>
</dbReference>
<dbReference type="GO" id="GO:0005737">
    <property type="term" value="C:cytoplasm"/>
    <property type="evidence" value="ECO:0007669"/>
    <property type="project" value="UniProtKB-SubCell"/>
</dbReference>
<dbReference type="GO" id="GO:0004019">
    <property type="term" value="F:adenylosuccinate synthase activity"/>
    <property type="evidence" value="ECO:0007669"/>
    <property type="project" value="UniProtKB-UniRule"/>
</dbReference>
<dbReference type="GO" id="GO:0005525">
    <property type="term" value="F:GTP binding"/>
    <property type="evidence" value="ECO:0007669"/>
    <property type="project" value="UniProtKB-UniRule"/>
</dbReference>
<dbReference type="GO" id="GO:0000287">
    <property type="term" value="F:magnesium ion binding"/>
    <property type="evidence" value="ECO:0007669"/>
    <property type="project" value="UniProtKB-UniRule"/>
</dbReference>
<dbReference type="GO" id="GO:0044208">
    <property type="term" value="P:'de novo' AMP biosynthetic process"/>
    <property type="evidence" value="ECO:0007669"/>
    <property type="project" value="UniProtKB-UniRule"/>
</dbReference>
<dbReference type="GO" id="GO:0046040">
    <property type="term" value="P:IMP metabolic process"/>
    <property type="evidence" value="ECO:0007669"/>
    <property type="project" value="TreeGrafter"/>
</dbReference>
<dbReference type="CDD" id="cd03108">
    <property type="entry name" value="AdSS"/>
    <property type="match status" value="1"/>
</dbReference>
<dbReference type="FunFam" id="1.10.300.10:FF:000001">
    <property type="entry name" value="Adenylosuccinate synthetase"/>
    <property type="match status" value="1"/>
</dbReference>
<dbReference type="FunFam" id="3.90.170.10:FF:000001">
    <property type="entry name" value="Adenylosuccinate synthetase"/>
    <property type="match status" value="1"/>
</dbReference>
<dbReference type="Gene3D" id="3.40.440.10">
    <property type="entry name" value="Adenylosuccinate Synthetase, subunit A, domain 1"/>
    <property type="match status" value="1"/>
</dbReference>
<dbReference type="Gene3D" id="1.10.300.10">
    <property type="entry name" value="Adenylosuccinate Synthetase, subunit A, domain 2"/>
    <property type="match status" value="1"/>
</dbReference>
<dbReference type="Gene3D" id="3.90.170.10">
    <property type="entry name" value="Adenylosuccinate Synthetase, subunit A, domain 3"/>
    <property type="match status" value="1"/>
</dbReference>
<dbReference type="HAMAP" id="MF_00011">
    <property type="entry name" value="Adenylosucc_synth"/>
    <property type="match status" value="1"/>
</dbReference>
<dbReference type="InterPro" id="IPR018220">
    <property type="entry name" value="Adenylosuccin_syn_GTP-bd"/>
</dbReference>
<dbReference type="InterPro" id="IPR033128">
    <property type="entry name" value="Adenylosuccin_syn_Lys_AS"/>
</dbReference>
<dbReference type="InterPro" id="IPR042109">
    <property type="entry name" value="Adenylosuccinate_synth_dom1"/>
</dbReference>
<dbReference type="InterPro" id="IPR042110">
    <property type="entry name" value="Adenylosuccinate_synth_dom2"/>
</dbReference>
<dbReference type="InterPro" id="IPR042111">
    <property type="entry name" value="Adenylosuccinate_synth_dom3"/>
</dbReference>
<dbReference type="InterPro" id="IPR001114">
    <property type="entry name" value="Adenylosuccinate_synthetase"/>
</dbReference>
<dbReference type="InterPro" id="IPR027417">
    <property type="entry name" value="P-loop_NTPase"/>
</dbReference>
<dbReference type="NCBIfam" id="NF002223">
    <property type="entry name" value="PRK01117.1"/>
    <property type="match status" value="1"/>
</dbReference>
<dbReference type="NCBIfam" id="TIGR00184">
    <property type="entry name" value="purA"/>
    <property type="match status" value="1"/>
</dbReference>
<dbReference type="PANTHER" id="PTHR11846">
    <property type="entry name" value="ADENYLOSUCCINATE SYNTHETASE"/>
    <property type="match status" value="1"/>
</dbReference>
<dbReference type="PANTHER" id="PTHR11846:SF0">
    <property type="entry name" value="ADENYLOSUCCINATE SYNTHETASE"/>
    <property type="match status" value="1"/>
</dbReference>
<dbReference type="Pfam" id="PF00709">
    <property type="entry name" value="Adenylsucc_synt"/>
    <property type="match status" value="1"/>
</dbReference>
<dbReference type="SMART" id="SM00788">
    <property type="entry name" value="Adenylsucc_synt"/>
    <property type="match status" value="1"/>
</dbReference>
<dbReference type="SUPFAM" id="SSF52540">
    <property type="entry name" value="P-loop containing nucleoside triphosphate hydrolases"/>
    <property type="match status" value="1"/>
</dbReference>
<dbReference type="PROSITE" id="PS01266">
    <property type="entry name" value="ADENYLOSUCCIN_SYN_1"/>
    <property type="match status" value="1"/>
</dbReference>
<dbReference type="PROSITE" id="PS00513">
    <property type="entry name" value="ADENYLOSUCCIN_SYN_2"/>
    <property type="match status" value="1"/>
</dbReference>
<comment type="function">
    <text evidence="1">Plays an important role in the de novo pathway of purine nucleotide biosynthesis. Catalyzes the first committed step in the biosynthesis of AMP from IMP.</text>
</comment>
<comment type="catalytic activity">
    <reaction evidence="1">
        <text>IMP + L-aspartate + GTP = N(6)-(1,2-dicarboxyethyl)-AMP + GDP + phosphate + 2 H(+)</text>
        <dbReference type="Rhea" id="RHEA:15753"/>
        <dbReference type="ChEBI" id="CHEBI:15378"/>
        <dbReference type="ChEBI" id="CHEBI:29991"/>
        <dbReference type="ChEBI" id="CHEBI:37565"/>
        <dbReference type="ChEBI" id="CHEBI:43474"/>
        <dbReference type="ChEBI" id="CHEBI:57567"/>
        <dbReference type="ChEBI" id="CHEBI:58053"/>
        <dbReference type="ChEBI" id="CHEBI:58189"/>
        <dbReference type="EC" id="6.3.4.4"/>
    </reaction>
</comment>
<comment type="cofactor">
    <cofactor evidence="1">
        <name>Mg(2+)</name>
        <dbReference type="ChEBI" id="CHEBI:18420"/>
    </cofactor>
    <text evidence="1">Binds 1 Mg(2+) ion per subunit.</text>
</comment>
<comment type="pathway">
    <text evidence="1">Purine metabolism; AMP biosynthesis via de novo pathway; AMP from IMP: step 1/2.</text>
</comment>
<comment type="subunit">
    <text evidence="1">Homodimer.</text>
</comment>
<comment type="subcellular location">
    <subcellularLocation>
        <location evidence="1">Cytoplasm</location>
    </subcellularLocation>
</comment>
<comment type="similarity">
    <text evidence="1">Belongs to the adenylosuccinate synthetase family.</text>
</comment>
<reference key="1">
    <citation type="submission" date="2006-03" db="EMBL/GenBank/DDBJ databases">
        <title>Complete sequence of Shewanella denitrificans OS217.</title>
        <authorList>
            <consortium name="US DOE Joint Genome Institute"/>
            <person name="Copeland A."/>
            <person name="Lucas S."/>
            <person name="Lapidus A."/>
            <person name="Barry K."/>
            <person name="Detter J.C."/>
            <person name="Glavina del Rio T."/>
            <person name="Hammon N."/>
            <person name="Israni S."/>
            <person name="Dalin E."/>
            <person name="Tice H."/>
            <person name="Pitluck S."/>
            <person name="Brettin T."/>
            <person name="Bruce D."/>
            <person name="Han C."/>
            <person name="Tapia R."/>
            <person name="Gilna P."/>
            <person name="Kiss H."/>
            <person name="Schmutz J."/>
            <person name="Larimer F."/>
            <person name="Land M."/>
            <person name="Hauser L."/>
            <person name="Kyrpides N."/>
            <person name="Lykidis A."/>
            <person name="Richardson P."/>
        </authorList>
    </citation>
    <scope>NUCLEOTIDE SEQUENCE [LARGE SCALE GENOMIC DNA]</scope>
    <source>
        <strain>OS217 / ATCC BAA-1090 / DSM 15013</strain>
    </source>
</reference>
<accession>Q12RX5</accession>
<protein>
    <recommendedName>
        <fullName evidence="1">Adenylosuccinate synthetase</fullName>
        <shortName evidence="1">AMPSase</shortName>
        <shortName evidence="1">AdSS</shortName>
        <ecNumber evidence="1">6.3.4.4</ecNumber>
    </recommendedName>
    <alternativeName>
        <fullName evidence="1">IMP--aspartate ligase</fullName>
    </alternativeName>
</protein>
<name>PURA_SHEDO</name>
<feature type="chain" id="PRO_1000000916" description="Adenylosuccinate synthetase">
    <location>
        <begin position="1"/>
        <end position="431"/>
    </location>
</feature>
<feature type="active site" description="Proton acceptor" evidence="1">
    <location>
        <position position="14"/>
    </location>
</feature>
<feature type="active site" description="Proton donor" evidence="1">
    <location>
        <position position="42"/>
    </location>
</feature>
<feature type="binding site" evidence="1">
    <location>
        <begin position="13"/>
        <end position="19"/>
    </location>
    <ligand>
        <name>GTP</name>
        <dbReference type="ChEBI" id="CHEBI:37565"/>
    </ligand>
</feature>
<feature type="binding site" description="in other chain" evidence="1">
    <location>
        <begin position="14"/>
        <end position="17"/>
    </location>
    <ligand>
        <name>IMP</name>
        <dbReference type="ChEBI" id="CHEBI:58053"/>
        <note>ligand shared between dimeric partners</note>
    </ligand>
</feature>
<feature type="binding site" evidence="1">
    <location>
        <position position="14"/>
    </location>
    <ligand>
        <name>Mg(2+)</name>
        <dbReference type="ChEBI" id="CHEBI:18420"/>
    </ligand>
</feature>
<feature type="binding site" description="in other chain" evidence="1">
    <location>
        <begin position="39"/>
        <end position="42"/>
    </location>
    <ligand>
        <name>IMP</name>
        <dbReference type="ChEBI" id="CHEBI:58053"/>
        <note>ligand shared between dimeric partners</note>
    </ligand>
</feature>
<feature type="binding site" evidence="1">
    <location>
        <begin position="41"/>
        <end position="43"/>
    </location>
    <ligand>
        <name>GTP</name>
        <dbReference type="ChEBI" id="CHEBI:37565"/>
    </ligand>
</feature>
<feature type="binding site" evidence="1">
    <location>
        <position position="41"/>
    </location>
    <ligand>
        <name>Mg(2+)</name>
        <dbReference type="ChEBI" id="CHEBI:18420"/>
    </ligand>
</feature>
<feature type="binding site" description="in other chain" evidence="1">
    <location>
        <position position="130"/>
    </location>
    <ligand>
        <name>IMP</name>
        <dbReference type="ChEBI" id="CHEBI:58053"/>
        <note>ligand shared between dimeric partners</note>
    </ligand>
</feature>
<feature type="binding site" evidence="1">
    <location>
        <position position="144"/>
    </location>
    <ligand>
        <name>IMP</name>
        <dbReference type="ChEBI" id="CHEBI:58053"/>
        <note>ligand shared between dimeric partners</note>
    </ligand>
</feature>
<feature type="binding site" description="in other chain" evidence="1">
    <location>
        <position position="225"/>
    </location>
    <ligand>
        <name>IMP</name>
        <dbReference type="ChEBI" id="CHEBI:58053"/>
        <note>ligand shared between dimeric partners</note>
    </ligand>
</feature>
<feature type="binding site" description="in other chain" evidence="1">
    <location>
        <position position="240"/>
    </location>
    <ligand>
        <name>IMP</name>
        <dbReference type="ChEBI" id="CHEBI:58053"/>
        <note>ligand shared between dimeric partners</note>
    </ligand>
</feature>
<feature type="binding site" evidence="1">
    <location>
        <begin position="300"/>
        <end position="306"/>
    </location>
    <ligand>
        <name>substrate</name>
    </ligand>
</feature>
<feature type="binding site" description="in other chain" evidence="1">
    <location>
        <position position="304"/>
    </location>
    <ligand>
        <name>IMP</name>
        <dbReference type="ChEBI" id="CHEBI:58053"/>
        <note>ligand shared between dimeric partners</note>
    </ligand>
</feature>
<feature type="binding site" evidence="1">
    <location>
        <position position="306"/>
    </location>
    <ligand>
        <name>GTP</name>
        <dbReference type="ChEBI" id="CHEBI:37565"/>
    </ligand>
</feature>
<feature type="binding site" evidence="1">
    <location>
        <begin position="332"/>
        <end position="334"/>
    </location>
    <ligand>
        <name>GTP</name>
        <dbReference type="ChEBI" id="CHEBI:37565"/>
    </ligand>
</feature>
<feature type="binding site" evidence="1">
    <location>
        <begin position="415"/>
        <end position="417"/>
    </location>
    <ligand>
        <name>GTP</name>
        <dbReference type="ChEBI" id="CHEBI:37565"/>
    </ligand>
</feature>